<dbReference type="EC" id="1.97.1.12" evidence="2"/>
<dbReference type="EMBL" id="DQ923117">
    <property type="protein sequence ID" value="ABI49916.1"/>
    <property type="molecule type" value="Genomic_DNA"/>
</dbReference>
<dbReference type="RefSeq" id="YP_740702.1">
    <property type="nucleotide sequence ID" value="NC_008336.1"/>
</dbReference>
<dbReference type="SMR" id="Q09FQ9"/>
<dbReference type="GeneID" id="4271650"/>
<dbReference type="GO" id="GO:0009535">
    <property type="term" value="C:chloroplast thylakoid membrane"/>
    <property type="evidence" value="ECO:0007669"/>
    <property type="project" value="UniProtKB-SubCell"/>
</dbReference>
<dbReference type="GO" id="GO:0009522">
    <property type="term" value="C:photosystem I"/>
    <property type="evidence" value="ECO:0007669"/>
    <property type="project" value="UniProtKB-KW"/>
</dbReference>
<dbReference type="GO" id="GO:0051539">
    <property type="term" value="F:4 iron, 4 sulfur cluster binding"/>
    <property type="evidence" value="ECO:0007669"/>
    <property type="project" value="UniProtKB-KW"/>
</dbReference>
<dbReference type="GO" id="GO:0009055">
    <property type="term" value="F:electron transfer activity"/>
    <property type="evidence" value="ECO:0007669"/>
    <property type="project" value="UniProtKB-UniRule"/>
</dbReference>
<dbReference type="GO" id="GO:0046872">
    <property type="term" value="F:metal ion binding"/>
    <property type="evidence" value="ECO:0007669"/>
    <property type="project" value="UniProtKB-KW"/>
</dbReference>
<dbReference type="GO" id="GO:0016491">
    <property type="term" value="F:oxidoreductase activity"/>
    <property type="evidence" value="ECO:0007669"/>
    <property type="project" value="UniProtKB-KW"/>
</dbReference>
<dbReference type="GO" id="GO:0009773">
    <property type="term" value="P:photosynthetic electron transport in photosystem I"/>
    <property type="evidence" value="ECO:0007669"/>
    <property type="project" value="InterPro"/>
</dbReference>
<dbReference type="FunFam" id="3.30.70.20:FF:000001">
    <property type="entry name" value="Photosystem I iron-sulfur center"/>
    <property type="match status" value="1"/>
</dbReference>
<dbReference type="Gene3D" id="3.30.70.20">
    <property type="match status" value="1"/>
</dbReference>
<dbReference type="HAMAP" id="MF_01303">
    <property type="entry name" value="PSI_PsaC"/>
    <property type="match status" value="1"/>
</dbReference>
<dbReference type="InterPro" id="IPR017896">
    <property type="entry name" value="4Fe4S_Fe-S-bd"/>
</dbReference>
<dbReference type="InterPro" id="IPR017900">
    <property type="entry name" value="4Fe4S_Fe_S_CS"/>
</dbReference>
<dbReference type="InterPro" id="IPR050157">
    <property type="entry name" value="PSI_iron-sulfur_center"/>
</dbReference>
<dbReference type="InterPro" id="IPR017491">
    <property type="entry name" value="PSI_PsaC"/>
</dbReference>
<dbReference type="NCBIfam" id="TIGR03048">
    <property type="entry name" value="PS_I_psaC"/>
    <property type="match status" value="1"/>
</dbReference>
<dbReference type="PANTHER" id="PTHR24960:SF79">
    <property type="entry name" value="PHOTOSYSTEM I IRON-SULFUR CENTER"/>
    <property type="match status" value="1"/>
</dbReference>
<dbReference type="PANTHER" id="PTHR24960">
    <property type="entry name" value="PHOTOSYSTEM I IRON-SULFUR CENTER-RELATED"/>
    <property type="match status" value="1"/>
</dbReference>
<dbReference type="Pfam" id="PF14697">
    <property type="entry name" value="Fer4_21"/>
    <property type="match status" value="1"/>
</dbReference>
<dbReference type="SUPFAM" id="SSF54862">
    <property type="entry name" value="4Fe-4S ferredoxins"/>
    <property type="match status" value="1"/>
</dbReference>
<dbReference type="PROSITE" id="PS00198">
    <property type="entry name" value="4FE4S_FER_1"/>
    <property type="match status" value="2"/>
</dbReference>
<dbReference type="PROSITE" id="PS51379">
    <property type="entry name" value="4FE4S_FER_2"/>
    <property type="match status" value="2"/>
</dbReference>
<geneLocation type="chloroplast"/>
<reference key="1">
    <citation type="journal article" date="2006" name="BMC Plant Biol.">
        <title>Rapid and accurate pyrosequencing of angiosperm plastid genomes.</title>
        <authorList>
            <person name="Moore M.J."/>
            <person name="Dhingra A."/>
            <person name="Soltis P.S."/>
            <person name="Shaw R."/>
            <person name="Farmerie W.G."/>
            <person name="Folta K.M."/>
            <person name="Soltis D.E."/>
        </authorList>
    </citation>
    <scope>NUCLEOTIDE SEQUENCE [LARGE SCALE GENOMIC DNA]</scope>
</reference>
<proteinExistence type="inferred from homology"/>
<name>PSAC_NANDO</name>
<feature type="initiator methionine" description="Removed" evidence="1">
    <location>
        <position position="1"/>
    </location>
</feature>
<feature type="chain" id="PRO_0000292122" description="Photosystem I iron-sulfur center">
    <location>
        <begin position="2"/>
        <end position="81"/>
    </location>
</feature>
<feature type="domain" description="4Fe-4S ferredoxin-type 1" evidence="2">
    <location>
        <begin position="2"/>
        <end position="31"/>
    </location>
</feature>
<feature type="domain" description="4Fe-4S ferredoxin-type 2" evidence="2">
    <location>
        <begin position="39"/>
        <end position="68"/>
    </location>
</feature>
<feature type="binding site" evidence="2">
    <location>
        <position position="11"/>
    </location>
    <ligand>
        <name>[4Fe-4S] cluster</name>
        <dbReference type="ChEBI" id="CHEBI:49883"/>
        <label>1</label>
    </ligand>
</feature>
<feature type="binding site" evidence="2">
    <location>
        <position position="14"/>
    </location>
    <ligand>
        <name>[4Fe-4S] cluster</name>
        <dbReference type="ChEBI" id="CHEBI:49883"/>
        <label>1</label>
    </ligand>
</feature>
<feature type="binding site" evidence="2">
    <location>
        <position position="17"/>
    </location>
    <ligand>
        <name>[4Fe-4S] cluster</name>
        <dbReference type="ChEBI" id="CHEBI:49883"/>
        <label>1</label>
    </ligand>
</feature>
<feature type="binding site" evidence="2">
    <location>
        <position position="21"/>
    </location>
    <ligand>
        <name>[4Fe-4S] cluster</name>
        <dbReference type="ChEBI" id="CHEBI:49883"/>
        <label>2</label>
    </ligand>
</feature>
<feature type="binding site" evidence="2">
    <location>
        <position position="48"/>
    </location>
    <ligand>
        <name>[4Fe-4S] cluster</name>
        <dbReference type="ChEBI" id="CHEBI:49883"/>
        <label>2</label>
    </ligand>
</feature>
<feature type="binding site" evidence="2">
    <location>
        <position position="51"/>
    </location>
    <ligand>
        <name>[4Fe-4S] cluster</name>
        <dbReference type="ChEBI" id="CHEBI:49883"/>
        <label>2</label>
    </ligand>
</feature>
<feature type="binding site" evidence="2">
    <location>
        <position position="54"/>
    </location>
    <ligand>
        <name>[4Fe-4S] cluster</name>
        <dbReference type="ChEBI" id="CHEBI:49883"/>
        <label>2</label>
    </ligand>
</feature>
<feature type="binding site" evidence="2">
    <location>
        <position position="58"/>
    </location>
    <ligand>
        <name>[4Fe-4S] cluster</name>
        <dbReference type="ChEBI" id="CHEBI:49883"/>
        <label>1</label>
    </ligand>
</feature>
<sequence length="81" mass="9038">MSHSVKIYDTCIGCTQCVRACPTDVLEMIPWDGCKAKQIASAPRTEDCVGCKRCESACPTDFLSVRVYLWHETTRSMGLAY</sequence>
<keyword id="KW-0004">4Fe-4S</keyword>
<keyword id="KW-0150">Chloroplast</keyword>
<keyword id="KW-0249">Electron transport</keyword>
<keyword id="KW-0408">Iron</keyword>
<keyword id="KW-0411">Iron-sulfur</keyword>
<keyword id="KW-0472">Membrane</keyword>
<keyword id="KW-0479">Metal-binding</keyword>
<keyword id="KW-0560">Oxidoreductase</keyword>
<keyword id="KW-0602">Photosynthesis</keyword>
<keyword id="KW-0603">Photosystem I</keyword>
<keyword id="KW-0934">Plastid</keyword>
<keyword id="KW-0677">Repeat</keyword>
<keyword id="KW-0793">Thylakoid</keyword>
<keyword id="KW-0813">Transport</keyword>
<comment type="function">
    <text evidence="2">Apoprotein for the two 4Fe-4S centers FA and FB of photosystem I (PSI); essential for photochemical activity. FB is the terminal electron acceptor of PSI, donating electrons to ferredoxin. The C-terminus interacts with PsaA/B/D and helps assemble the protein into the PSI complex. Required for binding of PsaD and PsaE to PSI. PSI is a plastocyanin-ferredoxin oxidoreductase, converting photonic excitation into a charge separation, which transfers an electron from the donor P700 chlorophyll pair to the spectroscopically characterized acceptors A0, A1, FX, FA and FB in turn.</text>
</comment>
<comment type="catalytic activity">
    <reaction evidence="2">
        <text>reduced [plastocyanin] + hnu + oxidized [2Fe-2S]-[ferredoxin] = oxidized [plastocyanin] + reduced [2Fe-2S]-[ferredoxin]</text>
        <dbReference type="Rhea" id="RHEA:30407"/>
        <dbReference type="Rhea" id="RHEA-COMP:10000"/>
        <dbReference type="Rhea" id="RHEA-COMP:10001"/>
        <dbReference type="Rhea" id="RHEA-COMP:10039"/>
        <dbReference type="Rhea" id="RHEA-COMP:10040"/>
        <dbReference type="ChEBI" id="CHEBI:29036"/>
        <dbReference type="ChEBI" id="CHEBI:30212"/>
        <dbReference type="ChEBI" id="CHEBI:33737"/>
        <dbReference type="ChEBI" id="CHEBI:33738"/>
        <dbReference type="ChEBI" id="CHEBI:49552"/>
        <dbReference type="EC" id="1.97.1.12"/>
    </reaction>
</comment>
<comment type="cofactor">
    <cofactor evidence="2">
        <name>[4Fe-4S] cluster</name>
        <dbReference type="ChEBI" id="CHEBI:49883"/>
    </cofactor>
    <text evidence="2">Binds 2 [4Fe-4S] clusters. Cluster 2 is most probably the spectroscopically characterized electron acceptor FA and cluster 1 is most probably FB.</text>
</comment>
<comment type="subunit">
    <text evidence="2">The eukaryotic PSI reaction center is composed of at least 11 subunits.</text>
</comment>
<comment type="subcellular location">
    <subcellularLocation>
        <location evidence="2">Plastid</location>
        <location evidence="2">Chloroplast thylakoid membrane</location>
        <topology evidence="2">Peripheral membrane protein</topology>
        <orientation evidence="2">Stromal side</orientation>
    </subcellularLocation>
</comment>
<evidence type="ECO:0000250" key="1"/>
<evidence type="ECO:0000255" key="2">
    <source>
        <dbReference type="HAMAP-Rule" id="MF_01303"/>
    </source>
</evidence>
<organism>
    <name type="scientific">Nandina domestica</name>
    <name type="common">Heavenly bamboo</name>
    <dbReference type="NCBI Taxonomy" id="41776"/>
    <lineage>
        <taxon>Eukaryota</taxon>
        <taxon>Viridiplantae</taxon>
        <taxon>Streptophyta</taxon>
        <taxon>Embryophyta</taxon>
        <taxon>Tracheophyta</taxon>
        <taxon>Spermatophyta</taxon>
        <taxon>Magnoliopsida</taxon>
        <taxon>Ranunculales</taxon>
        <taxon>Berberidaceae</taxon>
        <taxon>Nandinoideae</taxon>
        <taxon>Nandineae</taxon>
        <taxon>Nandina</taxon>
    </lineage>
</organism>
<protein>
    <recommendedName>
        <fullName evidence="2">Photosystem I iron-sulfur center</fullName>
        <ecNumber evidence="2">1.97.1.12</ecNumber>
    </recommendedName>
    <alternativeName>
        <fullName evidence="2">9 kDa polypeptide</fullName>
    </alternativeName>
    <alternativeName>
        <fullName evidence="2">PSI-C</fullName>
    </alternativeName>
    <alternativeName>
        <fullName evidence="2">Photosystem I subunit VII</fullName>
    </alternativeName>
    <alternativeName>
        <fullName evidence="2">PsaC</fullName>
    </alternativeName>
</protein>
<gene>
    <name evidence="2" type="primary">psaC</name>
</gene>
<accession>Q09FQ9</accession>